<name>DUT_HALSA</name>
<keyword id="KW-0378">Hydrolase</keyword>
<keyword id="KW-0546">Nucleotide metabolism</keyword>
<keyword id="KW-1185">Reference proteome</keyword>
<organism>
    <name type="scientific">Halobacterium salinarum (strain ATCC 700922 / JCM 11081 / NRC-1)</name>
    <name type="common">Halobacterium halobium</name>
    <dbReference type="NCBI Taxonomy" id="64091"/>
    <lineage>
        <taxon>Archaea</taxon>
        <taxon>Methanobacteriati</taxon>
        <taxon>Methanobacteriota</taxon>
        <taxon>Stenosarchaea group</taxon>
        <taxon>Halobacteria</taxon>
        <taxon>Halobacteriales</taxon>
        <taxon>Halobacteriaceae</taxon>
        <taxon>Halobacterium</taxon>
        <taxon>Halobacterium salinarum NRC-34001</taxon>
    </lineage>
</organism>
<reference key="1">
    <citation type="journal article" date="2000" name="Proc. Natl. Acad. Sci. U.S.A.">
        <title>Genome sequence of Halobacterium species NRC-1.</title>
        <authorList>
            <person name="Ng W.V."/>
            <person name="Kennedy S.P."/>
            <person name="Mahairas G.G."/>
            <person name="Berquist B."/>
            <person name="Pan M."/>
            <person name="Shukla H.D."/>
            <person name="Lasky S.R."/>
            <person name="Baliga N.S."/>
            <person name="Thorsson V."/>
            <person name="Sbrogna J."/>
            <person name="Swartzell S."/>
            <person name="Weir D."/>
            <person name="Hall J."/>
            <person name="Dahl T.A."/>
            <person name="Welti R."/>
            <person name="Goo Y.A."/>
            <person name="Leithauser B."/>
            <person name="Keller K."/>
            <person name="Cruz R."/>
            <person name="Danson M.J."/>
            <person name="Hough D.W."/>
            <person name="Maddocks D.G."/>
            <person name="Jablonski P.E."/>
            <person name="Krebs M.P."/>
            <person name="Angevine C.M."/>
            <person name="Dale H."/>
            <person name="Isenbarger T.A."/>
            <person name="Peck R.F."/>
            <person name="Pohlschroder M."/>
            <person name="Spudich J.L."/>
            <person name="Jung K.-H."/>
            <person name="Alam M."/>
            <person name="Freitas T."/>
            <person name="Hou S."/>
            <person name="Daniels C.J."/>
            <person name="Dennis P.P."/>
            <person name="Omer A.D."/>
            <person name="Ebhardt H."/>
            <person name="Lowe T.M."/>
            <person name="Liang P."/>
            <person name="Riley M."/>
            <person name="Hood L."/>
            <person name="DasSarma S."/>
        </authorList>
    </citation>
    <scope>NUCLEOTIDE SEQUENCE [LARGE SCALE GENOMIC DNA]</scope>
    <source>
        <strain>ATCC 700922 / JCM 11081 / NRC-1</strain>
    </source>
</reference>
<gene>
    <name evidence="1" type="primary">dut</name>
    <name type="ordered locus">VNG_2570G</name>
</gene>
<protein>
    <recommendedName>
        <fullName evidence="1">Probable deoxyuridine 5'-triphosphate nucleotidohydrolase</fullName>
        <shortName evidence="1">dUTPase</shortName>
        <ecNumber evidence="1">3.6.1.23</ecNumber>
    </recommendedName>
    <alternativeName>
        <fullName evidence="1">dUTP pyrophosphatase</fullName>
    </alternativeName>
</protein>
<sequence length="165" mass="18118">MYERGAFVADHVEPVADDQIQPNGVDLTVDAVLEQTEPGRIDTDGKTIGDRSPVTPTADEDSTDTTVTIQPGTYILQYAETITIPENHVGFVYPRSSLMRNSCMLHSAVWDAGYTGRGEGLFEVHHEITIARGARVAQLVLATGDHENTYDGSYQHERTDTRPGE</sequence>
<feature type="chain" id="PRO_0000153636" description="Probable deoxyuridine 5'-triphosphate nucleotidohydrolase">
    <location>
        <begin position="1"/>
        <end position="165"/>
    </location>
</feature>
<feature type="region of interest" description="Disordered" evidence="2">
    <location>
        <begin position="39"/>
        <end position="64"/>
    </location>
</feature>
<feature type="compositionally biased region" description="Basic and acidic residues" evidence="2">
    <location>
        <begin position="39"/>
        <end position="49"/>
    </location>
</feature>
<proteinExistence type="inferred from homology"/>
<accession>Q9HMF3</accession>
<comment type="function">
    <text evidence="1">This enzyme is involved in nucleotide metabolism: it produces dUMP, the immediate precursor of thymidine nucleotides and it decreases the intracellular concentration of dUTP so that uracil cannot be incorporated into DNA.</text>
</comment>
<comment type="catalytic activity">
    <reaction evidence="1">
        <text>dUTP + H2O = dUMP + diphosphate + H(+)</text>
        <dbReference type="Rhea" id="RHEA:10248"/>
        <dbReference type="ChEBI" id="CHEBI:15377"/>
        <dbReference type="ChEBI" id="CHEBI:15378"/>
        <dbReference type="ChEBI" id="CHEBI:33019"/>
        <dbReference type="ChEBI" id="CHEBI:61555"/>
        <dbReference type="ChEBI" id="CHEBI:246422"/>
        <dbReference type="EC" id="3.6.1.23"/>
    </reaction>
</comment>
<comment type="pathway">
    <text evidence="1">Pyrimidine metabolism; dUMP biosynthesis; dUMP from dCTP (dUTP route): step 2/2.</text>
</comment>
<comment type="similarity">
    <text evidence="1">Belongs to the dCTP deaminase family. Archaeal dUTPase subfamily.</text>
</comment>
<evidence type="ECO:0000255" key="1">
    <source>
        <dbReference type="HAMAP-Rule" id="MF_00635"/>
    </source>
</evidence>
<evidence type="ECO:0000256" key="2">
    <source>
        <dbReference type="SAM" id="MobiDB-lite"/>
    </source>
</evidence>
<dbReference type="EC" id="3.6.1.23" evidence="1"/>
<dbReference type="EMBL" id="AE004437">
    <property type="protein sequence ID" value="AAG20618.1"/>
    <property type="molecule type" value="Genomic_DNA"/>
</dbReference>
<dbReference type="PIR" id="F84406">
    <property type="entry name" value="F84406"/>
</dbReference>
<dbReference type="RefSeq" id="WP_010903920.1">
    <property type="nucleotide sequence ID" value="NC_002607.1"/>
</dbReference>
<dbReference type="SMR" id="Q9HMF3"/>
<dbReference type="FunCoup" id="Q9HMF3">
    <property type="interactions" value="16"/>
</dbReference>
<dbReference type="STRING" id="64091.VNG_2570G"/>
<dbReference type="PaxDb" id="64091-VNG_2570G"/>
<dbReference type="KEGG" id="hal:VNG_2570G"/>
<dbReference type="PATRIC" id="fig|64091.14.peg.1990"/>
<dbReference type="HOGENOM" id="CLU_103451_1_0_2"/>
<dbReference type="InParanoid" id="Q9HMF3"/>
<dbReference type="OrthoDB" id="45265at2157"/>
<dbReference type="PhylomeDB" id="Q9HMF3"/>
<dbReference type="UniPathway" id="UPA00610">
    <property type="reaction ID" value="UER00666"/>
</dbReference>
<dbReference type="Proteomes" id="UP000000554">
    <property type="component" value="Chromosome"/>
</dbReference>
<dbReference type="GO" id="GO:0008829">
    <property type="term" value="F:dCTP deaminase activity"/>
    <property type="evidence" value="ECO:0007669"/>
    <property type="project" value="InterPro"/>
</dbReference>
<dbReference type="GO" id="GO:0004170">
    <property type="term" value="F:dUTP diphosphatase activity"/>
    <property type="evidence" value="ECO:0007669"/>
    <property type="project" value="UniProtKB-UniRule"/>
</dbReference>
<dbReference type="GO" id="GO:0006226">
    <property type="term" value="P:dUMP biosynthetic process"/>
    <property type="evidence" value="ECO:0007669"/>
    <property type="project" value="UniProtKB-UniRule"/>
</dbReference>
<dbReference type="GO" id="GO:0006229">
    <property type="term" value="P:dUTP biosynthetic process"/>
    <property type="evidence" value="ECO:0007669"/>
    <property type="project" value="InterPro"/>
</dbReference>
<dbReference type="CDD" id="cd07557">
    <property type="entry name" value="trimeric_dUTPase"/>
    <property type="match status" value="1"/>
</dbReference>
<dbReference type="Gene3D" id="2.70.40.10">
    <property type="match status" value="1"/>
</dbReference>
<dbReference type="HAMAP" id="MF_00635">
    <property type="entry name" value="dUTPase_arch"/>
    <property type="match status" value="1"/>
</dbReference>
<dbReference type="InterPro" id="IPR011962">
    <property type="entry name" value="dCTP_deaminase"/>
</dbReference>
<dbReference type="InterPro" id="IPR036157">
    <property type="entry name" value="dUTPase-like_sf"/>
</dbReference>
<dbReference type="InterPro" id="IPR023537">
    <property type="entry name" value="dUTPase_archaeal"/>
</dbReference>
<dbReference type="InterPro" id="IPR033704">
    <property type="entry name" value="dUTPase_trimeric"/>
</dbReference>
<dbReference type="NCBIfam" id="NF002598">
    <property type="entry name" value="PRK02253.1"/>
    <property type="match status" value="1"/>
</dbReference>
<dbReference type="PANTHER" id="PTHR42680">
    <property type="entry name" value="DCTP DEAMINASE"/>
    <property type="match status" value="1"/>
</dbReference>
<dbReference type="PANTHER" id="PTHR42680:SF1">
    <property type="entry name" value="DEOXYURIDINE 5'-TRIPHOSPHATE NUCLEOTIDOHYDROLASE"/>
    <property type="match status" value="1"/>
</dbReference>
<dbReference type="Pfam" id="PF22769">
    <property type="entry name" value="DCD"/>
    <property type="match status" value="1"/>
</dbReference>
<dbReference type="SUPFAM" id="SSF51283">
    <property type="entry name" value="dUTPase-like"/>
    <property type="match status" value="1"/>
</dbReference>